<organism>
    <name type="scientific">Arabidopsis thaliana</name>
    <name type="common">Mouse-ear cress</name>
    <dbReference type="NCBI Taxonomy" id="3702"/>
    <lineage>
        <taxon>Eukaryota</taxon>
        <taxon>Viridiplantae</taxon>
        <taxon>Streptophyta</taxon>
        <taxon>Embryophyta</taxon>
        <taxon>Tracheophyta</taxon>
        <taxon>Spermatophyta</taxon>
        <taxon>Magnoliopsida</taxon>
        <taxon>eudicotyledons</taxon>
        <taxon>Gunneridae</taxon>
        <taxon>Pentapetalae</taxon>
        <taxon>rosids</taxon>
        <taxon>malvids</taxon>
        <taxon>Brassicales</taxon>
        <taxon>Brassicaceae</taxon>
        <taxon>Camelineae</taxon>
        <taxon>Arabidopsis</taxon>
    </lineage>
</organism>
<protein>
    <recommendedName>
        <fullName>Protein MID1-COMPLEMENTING ACTIVITY 2</fullName>
    </recommendedName>
</protein>
<evidence type="ECO:0000255" key="1"/>
<evidence type="ECO:0000269" key="2">
    <source>
    </source>
</evidence>
<evidence type="ECO:0000305" key="3"/>
<proteinExistence type="evidence at transcript level"/>
<name>MCAC2_ARATH</name>
<sequence length="416" mass="47414">MANSWDQLGEIASVAQLTGIDALKLIGMIVNAANTARMHKKNCRQFAHHLKLIRNLLEQIKNSEMNQRSEILEPLQGLDDALRRSYILVKSCQEKSYLYLLAMGWNIVNQFEKAQNEIDLFLKIVPLINMADNARIRERLEAIERDQREYTLDEEDRKVQDVILKQESTREAATSVLKKTLSRSYPNMGFCEALKTEEEKLQLELQRSRARYDADQCEVIQRLIDVTQTAATVEPNLEKVLTKKEELTSSKKRDDLYDTDSSSIRADSRSTSYVSSGHELLSGRSLQHRGNWHADLLDCCSEPCLCLKTLFFPCGTLAKISTVATSRQISSTEVCKNLIVYSLILSCCCYTCCIRKKLRKTLNITGGCIDDFLSHLMCCCCALVQELREVEIHRASYGTEKSNKEMSPPTPQFMEE</sequence>
<reference key="1">
    <citation type="journal article" date="2007" name="Proc. Natl. Acad. Sci. U.S.A.">
        <title>Arabidopsis plasma membrane protein crucial for Ca2+ influx and touch sensing in roots.</title>
        <authorList>
            <person name="Nakagawa Y."/>
            <person name="Katagiri T."/>
            <person name="Shinozaki K."/>
            <person name="Qi Z."/>
            <person name="Tatsumi H."/>
            <person name="Furuichi T."/>
            <person name="Kishigami A."/>
            <person name="Sokabe M."/>
            <person name="Kojima I."/>
            <person name="Sato S."/>
            <person name="Kato T."/>
            <person name="Tabata S."/>
            <person name="Iida K."/>
            <person name="Terashima A."/>
            <person name="Nakano M."/>
            <person name="Ikeda M."/>
            <person name="Yamanaka T."/>
            <person name="Iida H."/>
        </authorList>
    </citation>
    <scope>NUCLEOTIDE SEQUENCE [MRNA] (ISOFORM 1)</scope>
</reference>
<reference key="2">
    <citation type="journal article" date="1999" name="Nature">
        <title>Sequence and analysis of chromosome 2 of the plant Arabidopsis thaliana.</title>
        <authorList>
            <person name="Lin X."/>
            <person name="Kaul S."/>
            <person name="Rounsley S.D."/>
            <person name="Shea T.P."/>
            <person name="Benito M.-I."/>
            <person name="Town C.D."/>
            <person name="Fujii C.Y."/>
            <person name="Mason T.M."/>
            <person name="Bowman C.L."/>
            <person name="Barnstead M.E."/>
            <person name="Feldblyum T.V."/>
            <person name="Buell C.R."/>
            <person name="Ketchum K.A."/>
            <person name="Lee J.J."/>
            <person name="Ronning C.M."/>
            <person name="Koo H.L."/>
            <person name="Moffat K.S."/>
            <person name="Cronin L.A."/>
            <person name="Shen M."/>
            <person name="Pai G."/>
            <person name="Van Aken S."/>
            <person name="Umayam L."/>
            <person name="Tallon L.J."/>
            <person name="Gill J.E."/>
            <person name="Adams M.D."/>
            <person name="Carrera A.J."/>
            <person name="Creasy T.H."/>
            <person name="Goodman H.M."/>
            <person name="Somerville C.R."/>
            <person name="Copenhaver G.P."/>
            <person name="Preuss D."/>
            <person name="Nierman W.C."/>
            <person name="White O."/>
            <person name="Eisen J.A."/>
            <person name="Salzberg S.L."/>
            <person name="Fraser C.M."/>
            <person name="Venter J.C."/>
        </authorList>
    </citation>
    <scope>NUCLEOTIDE SEQUENCE [LARGE SCALE GENOMIC DNA]</scope>
    <source>
        <strain>cv. Columbia</strain>
    </source>
</reference>
<reference key="3">
    <citation type="journal article" date="2017" name="Plant J.">
        <title>Araport11: a complete reannotation of the Arabidopsis thaliana reference genome.</title>
        <authorList>
            <person name="Cheng C.Y."/>
            <person name="Krishnakumar V."/>
            <person name="Chan A.P."/>
            <person name="Thibaud-Nissen F."/>
            <person name="Schobel S."/>
            <person name="Town C.D."/>
        </authorList>
    </citation>
    <scope>GENOME REANNOTATION</scope>
    <source>
        <strain>cv. Columbia</strain>
    </source>
</reference>
<reference key="4">
    <citation type="journal article" date="2010" name="Plant Physiol.">
        <title>MCA1 and MCA2 that mediate Ca2+ uptake have distinct and overlapping roles in Arabidopsis.</title>
        <authorList>
            <person name="Yamanaka T."/>
            <person name="Nakagawa Y."/>
            <person name="Mori K."/>
            <person name="Nakano M."/>
            <person name="Imamura T."/>
            <person name="Kataoka H."/>
            <person name="Terashima A."/>
            <person name="Iida K."/>
            <person name="Kojima I."/>
            <person name="Katagiri T."/>
            <person name="Shinozaki K."/>
            <person name="Iida H."/>
        </authorList>
    </citation>
    <scope>FUNCTION</scope>
    <scope>TISSUE SPECIFICITY</scope>
    <scope>SUBCELLULAR LOCATION</scope>
    <scope>ACTIVITY REGULATION</scope>
    <scope>DISRUPTION PHENOTYPE</scope>
</reference>
<accession>Q3EBY6</accession>
<accession>A2PYH1</accession>
<accession>Q2V480</accession>
<accession>Q2V481</accession>
<accession>Q2V482</accession>
<dbReference type="EMBL" id="AB196961">
    <property type="protein sequence ID" value="BAF46390.1"/>
    <property type="molecule type" value="mRNA"/>
</dbReference>
<dbReference type="EMBL" id="CP002685">
    <property type="protein sequence ID" value="AEC06682.1"/>
    <property type="molecule type" value="Genomic_DNA"/>
</dbReference>
<dbReference type="EMBL" id="CP002685">
    <property type="protein sequence ID" value="AEC06683.1"/>
    <property type="molecule type" value="Genomic_DNA"/>
</dbReference>
<dbReference type="EMBL" id="CP002685">
    <property type="protein sequence ID" value="AEC06684.1"/>
    <property type="molecule type" value="Genomic_DNA"/>
</dbReference>
<dbReference type="EMBL" id="CP002685">
    <property type="protein sequence ID" value="AEC06685.1"/>
    <property type="molecule type" value="Genomic_DNA"/>
</dbReference>
<dbReference type="EMBL" id="CP002685">
    <property type="protein sequence ID" value="ANM62012.1"/>
    <property type="molecule type" value="Genomic_DNA"/>
</dbReference>
<dbReference type="EMBL" id="CP002685">
    <property type="protein sequence ID" value="ANM62013.1"/>
    <property type="molecule type" value="Genomic_DNA"/>
</dbReference>
<dbReference type="EMBL" id="CP002685">
    <property type="protein sequence ID" value="ANM62015.1"/>
    <property type="molecule type" value="Genomic_DNA"/>
</dbReference>
<dbReference type="EMBL" id="CP002685">
    <property type="protein sequence ID" value="ANM62016.1"/>
    <property type="molecule type" value="Genomic_DNA"/>
</dbReference>
<dbReference type="EMBL" id="CP002685">
    <property type="protein sequence ID" value="ANM62017.1"/>
    <property type="molecule type" value="Genomic_DNA"/>
</dbReference>
<dbReference type="RefSeq" id="NP_001031366.1">
    <molecule id="Q3EBY6-2"/>
    <property type="nucleotide sequence ID" value="NM_001036289.1"/>
</dbReference>
<dbReference type="RefSeq" id="NP_001031367.1">
    <molecule id="Q3EBY6-3"/>
    <property type="nucleotide sequence ID" value="NM_001036290.2"/>
</dbReference>
<dbReference type="RefSeq" id="NP_001031368.1">
    <molecule id="Q3EBY6-4"/>
    <property type="nucleotide sequence ID" value="NM_001036291.1"/>
</dbReference>
<dbReference type="RefSeq" id="NP_001324195.1">
    <molecule id="Q3EBY6-3"/>
    <property type="nucleotide sequence ID" value="NM_001335561.1"/>
</dbReference>
<dbReference type="RefSeq" id="NP_001324196.1">
    <molecule id="Q3EBY6-1"/>
    <property type="nucleotide sequence ID" value="NM_001335556.1"/>
</dbReference>
<dbReference type="RefSeq" id="NP_001324198.1">
    <molecule id="Q3EBY6-1"/>
    <property type="nucleotide sequence ID" value="NM_001335557.1"/>
</dbReference>
<dbReference type="RefSeq" id="NP_001324199.1">
    <molecule id="Q3EBY6-1"/>
    <property type="nucleotide sequence ID" value="NM_001335558.1"/>
</dbReference>
<dbReference type="RefSeq" id="NP_001324200.1">
    <molecule id="Q3EBY6-1"/>
    <property type="nucleotide sequence ID" value="NM_001335559.1"/>
</dbReference>
<dbReference type="RefSeq" id="NP_179369.2">
    <molecule id="Q3EBY6-1"/>
    <property type="nucleotide sequence ID" value="NM_127332.3"/>
</dbReference>
<dbReference type="EMDB" id="EMD-2313"/>
<dbReference type="SMR" id="Q3EBY6"/>
<dbReference type="FunCoup" id="Q3EBY6">
    <property type="interactions" value="139"/>
</dbReference>
<dbReference type="STRING" id="3702.Q3EBY6"/>
<dbReference type="TCDB" id="1.A.87.1.2">
    <property type="family name" value="the mechanosensitive calcium channel (mca) family"/>
</dbReference>
<dbReference type="GlyGen" id="Q3EBY6">
    <property type="glycosylation" value="1 site"/>
</dbReference>
<dbReference type="PaxDb" id="3702-AT2G17780.1"/>
<dbReference type="ProteomicsDB" id="238890">
    <molecule id="Q3EBY6-1"/>
</dbReference>
<dbReference type="EnsemblPlants" id="AT2G17780.1">
    <molecule id="Q3EBY6-1"/>
    <property type="protein sequence ID" value="AT2G17780.1"/>
    <property type="gene ID" value="AT2G17780"/>
</dbReference>
<dbReference type="EnsemblPlants" id="AT2G17780.10">
    <molecule id="Q3EBY6-1"/>
    <property type="protein sequence ID" value="AT2G17780.10"/>
    <property type="gene ID" value="AT2G17780"/>
</dbReference>
<dbReference type="EnsemblPlants" id="AT2G17780.2">
    <molecule id="Q3EBY6-2"/>
    <property type="protein sequence ID" value="AT2G17780.2"/>
    <property type="gene ID" value="AT2G17780"/>
</dbReference>
<dbReference type="EnsemblPlants" id="AT2G17780.3">
    <molecule id="Q3EBY6-3"/>
    <property type="protein sequence ID" value="AT2G17780.3"/>
    <property type="gene ID" value="AT2G17780"/>
</dbReference>
<dbReference type="EnsemblPlants" id="AT2G17780.4">
    <molecule id="Q3EBY6-4"/>
    <property type="protein sequence ID" value="AT2G17780.4"/>
    <property type="gene ID" value="AT2G17780"/>
</dbReference>
<dbReference type="EnsemblPlants" id="AT2G17780.5">
    <molecule id="Q3EBY6-1"/>
    <property type="protein sequence ID" value="AT2G17780.5"/>
    <property type="gene ID" value="AT2G17780"/>
</dbReference>
<dbReference type="EnsemblPlants" id="AT2G17780.6">
    <molecule id="Q3EBY6-1"/>
    <property type="protein sequence ID" value="AT2G17780.6"/>
    <property type="gene ID" value="AT2G17780"/>
</dbReference>
<dbReference type="EnsemblPlants" id="AT2G17780.7">
    <molecule id="Q3EBY6-1"/>
    <property type="protein sequence ID" value="AT2G17780.7"/>
    <property type="gene ID" value="AT2G17780"/>
</dbReference>
<dbReference type="EnsemblPlants" id="AT2G17780.9">
    <molecule id="Q3EBY6-3"/>
    <property type="protein sequence ID" value="AT2G17780.9"/>
    <property type="gene ID" value="AT2G17780"/>
</dbReference>
<dbReference type="GeneID" id="816287"/>
<dbReference type="Gramene" id="AT2G17780.1">
    <molecule id="Q3EBY6-1"/>
    <property type="protein sequence ID" value="AT2G17780.1"/>
    <property type="gene ID" value="AT2G17780"/>
</dbReference>
<dbReference type="Gramene" id="AT2G17780.10">
    <molecule id="Q3EBY6-1"/>
    <property type="protein sequence ID" value="AT2G17780.10"/>
    <property type="gene ID" value="AT2G17780"/>
</dbReference>
<dbReference type="Gramene" id="AT2G17780.2">
    <molecule id="Q3EBY6-2"/>
    <property type="protein sequence ID" value="AT2G17780.2"/>
    <property type="gene ID" value="AT2G17780"/>
</dbReference>
<dbReference type="Gramene" id="AT2G17780.3">
    <molecule id="Q3EBY6-3"/>
    <property type="protein sequence ID" value="AT2G17780.3"/>
    <property type="gene ID" value="AT2G17780"/>
</dbReference>
<dbReference type="Gramene" id="AT2G17780.4">
    <molecule id="Q3EBY6-4"/>
    <property type="protein sequence ID" value="AT2G17780.4"/>
    <property type="gene ID" value="AT2G17780"/>
</dbReference>
<dbReference type="Gramene" id="AT2G17780.5">
    <molecule id="Q3EBY6-1"/>
    <property type="protein sequence ID" value="AT2G17780.5"/>
    <property type="gene ID" value="AT2G17780"/>
</dbReference>
<dbReference type="Gramene" id="AT2G17780.6">
    <molecule id="Q3EBY6-1"/>
    <property type="protein sequence ID" value="AT2G17780.6"/>
    <property type="gene ID" value="AT2G17780"/>
</dbReference>
<dbReference type="Gramene" id="AT2G17780.7">
    <molecule id="Q3EBY6-1"/>
    <property type="protein sequence ID" value="AT2G17780.7"/>
    <property type="gene ID" value="AT2G17780"/>
</dbReference>
<dbReference type="Gramene" id="AT2G17780.9">
    <molecule id="Q3EBY6-3"/>
    <property type="protein sequence ID" value="AT2G17780.9"/>
    <property type="gene ID" value="AT2G17780"/>
</dbReference>
<dbReference type="KEGG" id="ath:AT2G17780"/>
<dbReference type="Araport" id="AT2G17780"/>
<dbReference type="TAIR" id="AT2G17780">
    <property type="gene designation" value="MCA2"/>
</dbReference>
<dbReference type="eggNOG" id="ENOG502QQIG">
    <property type="taxonomic scope" value="Eukaryota"/>
</dbReference>
<dbReference type="InParanoid" id="Q3EBY6"/>
<dbReference type="OMA" id="HENWHAD"/>
<dbReference type="OrthoDB" id="1045822at2759"/>
<dbReference type="PhylomeDB" id="Q3EBY6"/>
<dbReference type="PRO" id="PR:Q3EBY6"/>
<dbReference type="Proteomes" id="UP000006548">
    <property type="component" value="Chromosome 2"/>
</dbReference>
<dbReference type="ExpressionAtlas" id="Q3EBY6">
    <property type="expression patterns" value="baseline and differential"/>
</dbReference>
<dbReference type="GO" id="GO:0005886">
    <property type="term" value="C:plasma membrane"/>
    <property type="evidence" value="ECO:0000314"/>
    <property type="project" value="TAIR"/>
</dbReference>
<dbReference type="GO" id="GO:0005262">
    <property type="term" value="F:calcium channel activity"/>
    <property type="evidence" value="ECO:0000314"/>
    <property type="project" value="TAIR"/>
</dbReference>
<dbReference type="GO" id="GO:0007166">
    <property type="term" value="P:cell surface receptor signaling pathway"/>
    <property type="evidence" value="ECO:0007669"/>
    <property type="project" value="InterPro"/>
</dbReference>
<dbReference type="GO" id="GO:0048528">
    <property type="term" value="P:post-embryonic root development"/>
    <property type="evidence" value="ECO:0000316"/>
    <property type="project" value="TAIR"/>
</dbReference>
<dbReference type="CDD" id="cd21037">
    <property type="entry name" value="MLKL_NTD"/>
    <property type="match status" value="1"/>
</dbReference>
<dbReference type="FunFam" id="1.20.930.20:FF:000003">
    <property type="entry name" value="DNA mismatch repair protein MLH1"/>
    <property type="match status" value="1"/>
</dbReference>
<dbReference type="Gene3D" id="1.20.930.20">
    <property type="entry name" value="Adaptor protein Cbl, N-terminal domain"/>
    <property type="match status" value="1"/>
</dbReference>
<dbReference type="InterPro" id="IPR036537">
    <property type="entry name" value="Adaptor_Cbl_N_dom_sf"/>
</dbReference>
<dbReference type="InterPro" id="IPR045766">
    <property type="entry name" value="MCAfunc"/>
</dbReference>
<dbReference type="InterPro" id="IPR006461">
    <property type="entry name" value="PLAC_motif_containing"/>
</dbReference>
<dbReference type="NCBIfam" id="TIGR01571">
    <property type="entry name" value="A_thal_Cys_rich"/>
    <property type="match status" value="1"/>
</dbReference>
<dbReference type="PANTHER" id="PTHR46604">
    <property type="entry name" value="PROTEIN MID1-COMPLEMENTING ACTIVITY 1"/>
    <property type="match status" value="1"/>
</dbReference>
<dbReference type="PANTHER" id="PTHR46604:SF15">
    <property type="entry name" value="PROTEIN MID1-COMPLEMENTING ACTIVITY 2"/>
    <property type="match status" value="1"/>
</dbReference>
<dbReference type="Pfam" id="PF19584">
    <property type="entry name" value="MCAfunc"/>
    <property type="match status" value="1"/>
</dbReference>
<dbReference type="Pfam" id="PF04749">
    <property type="entry name" value="PLAC8"/>
    <property type="match status" value="1"/>
</dbReference>
<feature type="chain" id="PRO_0000407742" description="Protein MID1-COMPLEMENTING ACTIVITY 2">
    <location>
        <begin position="1"/>
        <end position="416"/>
    </location>
</feature>
<feature type="transmembrane region" description="Helical" evidence="1">
    <location>
        <begin position="338"/>
        <end position="354"/>
    </location>
</feature>
<feature type="coiled-coil region" evidence="1">
    <location>
        <begin position="191"/>
        <end position="219"/>
    </location>
</feature>
<feature type="splice variant" id="VSP_040965" description="In isoform 4." evidence="3">
    <original>LKTLFFPCGTLAKISTVATSRQISSTEVCKNLIVYSLILSCCCYTCCIRKKLRKTLNITGGCIDDFLSHLMCCCCALVQELREVEIHRASYGTEKSNKEMSPPTPQFMEE</original>
    <variation>KPSHSVFI</variation>
    <location>
        <begin position="307"/>
        <end position="416"/>
    </location>
</feature>
<feature type="splice variant" id="VSP_040966" description="In isoform 2." evidence="3">
    <location>
        <begin position="398"/>
        <end position="399"/>
    </location>
</feature>
<feature type="splice variant" id="VSP_040967" description="In isoform 3." evidence="3">
    <original>TEKSNKEMSPPTPQFMEE</original>
    <variation>KIYTFTDILTYF</variation>
    <location>
        <begin position="399"/>
        <end position="416"/>
    </location>
</feature>
<gene>
    <name type="primary">MCA2</name>
    <name type="ordered locus">At2g17780</name>
    <name type="ORF">T17A5.4</name>
</gene>
<keyword id="KW-0025">Alternative splicing</keyword>
<keyword id="KW-1003">Cell membrane</keyword>
<keyword id="KW-0175">Coiled coil</keyword>
<keyword id="KW-0472">Membrane</keyword>
<keyword id="KW-1185">Reference proteome</keyword>
<keyword id="KW-0812">Transmembrane</keyword>
<keyword id="KW-1133">Transmembrane helix</keyword>
<comment type="function">
    <text evidence="2">Calcium-permeable stretch-activated channel component. Probably involved in mechanosensing and in mechano-stimulated calcium uptake mechanism.</text>
</comment>
<comment type="activity regulation">
    <text evidence="2">Inhibited by GdCl(3), but not by verapamil.</text>
</comment>
<comment type="subcellular location">
    <subcellularLocation>
        <location evidence="2">Cell membrane</location>
        <topology evidence="2">Single-pass membrane protein</topology>
    </subcellularLocation>
</comment>
<comment type="alternative products">
    <event type="alternative splicing"/>
    <isoform>
        <id>Q3EBY6-1</id>
        <name>1</name>
        <sequence type="displayed"/>
    </isoform>
    <isoform>
        <id>Q3EBY6-2</id>
        <name>2</name>
        <sequence type="described" ref="VSP_040966"/>
    </isoform>
    <isoform>
        <id>Q3EBY6-3</id>
        <name>3</name>
        <sequence type="described" ref="VSP_040967"/>
    </isoform>
    <isoform>
        <id>Q3EBY6-4</id>
        <name>4</name>
        <sequence type="described" ref="VSP_040965"/>
    </isoform>
</comment>
<comment type="tissue specificity">
    <text evidence="2">Expressed in roots, leaves, stems, flowers and siliques. In the root, high levels of expression in vascular tissues, in the stele and endodermis, but no expression in the cortex, epidermis, root cap, promeristem and adjacent elongation zone of the primary root. Not expressed in root hairs. Detected in shoot apical meristem, leaf mesophyll cells and vascular tissues, upper half of inflorescence, but not in petioles of rosette leaves.</text>
</comment>
<comment type="disruption phenotype">
    <text evidence="2">No visible phenotype when grown under normal conditions, due to redundancy with MCA1. The roots are able to normally sense the hardness of the growth medium. Mca1 and mca2 double mutant shows a strong growth defect.</text>
</comment>